<comment type="function">
    <text evidence="1">Exhibits S-adenosyl-L-methionine-dependent methyltransferase activity.</text>
</comment>
<comment type="similarity">
    <text evidence="2">Belongs to the UPF0677 family.</text>
</comment>
<feature type="chain" id="PRO_0000361152" description="Putative S-adenosyl-L-methionine-dependent methyltransferase BCG_0883">
    <location>
        <begin position="1"/>
        <end position="301"/>
    </location>
</feature>
<feature type="binding site" evidence="1">
    <location>
        <position position="127"/>
    </location>
    <ligand>
        <name>S-adenosyl-L-methionine</name>
        <dbReference type="ChEBI" id="CHEBI:59789"/>
    </ligand>
</feature>
<feature type="binding site" evidence="1">
    <location>
        <begin position="156"/>
        <end position="157"/>
    </location>
    <ligand>
        <name>S-adenosyl-L-methionine</name>
        <dbReference type="ChEBI" id="CHEBI:59789"/>
    </ligand>
</feature>
<dbReference type="EC" id="2.1.1.-"/>
<dbReference type="EMBL" id="AM408590">
    <property type="protein sequence ID" value="CAL70869.1"/>
    <property type="molecule type" value="Genomic_DNA"/>
</dbReference>
<dbReference type="RefSeq" id="WP_003404349.1">
    <property type="nucleotide sequence ID" value="NC_008769.1"/>
</dbReference>
<dbReference type="SMR" id="A1KGW3"/>
<dbReference type="KEGG" id="mbb:BCG_0883"/>
<dbReference type="HOGENOM" id="CLU_056160_2_1_11"/>
<dbReference type="Proteomes" id="UP000001472">
    <property type="component" value="Chromosome"/>
</dbReference>
<dbReference type="GO" id="GO:0008168">
    <property type="term" value="F:methyltransferase activity"/>
    <property type="evidence" value="ECO:0007669"/>
    <property type="project" value="UniProtKB-KW"/>
</dbReference>
<dbReference type="GO" id="GO:0032259">
    <property type="term" value="P:methylation"/>
    <property type="evidence" value="ECO:0007669"/>
    <property type="project" value="UniProtKB-KW"/>
</dbReference>
<dbReference type="FunFam" id="3.40.50.150:FF:000152">
    <property type="entry name" value="S-adenosyl-L-methionine-dependent methyltransferase"/>
    <property type="match status" value="1"/>
</dbReference>
<dbReference type="Gene3D" id="3.40.50.150">
    <property type="entry name" value="Vaccinia Virus protein VP39"/>
    <property type="match status" value="1"/>
</dbReference>
<dbReference type="InterPro" id="IPR007213">
    <property type="entry name" value="Ppm1/Ppm2/Tcmp"/>
</dbReference>
<dbReference type="InterPro" id="IPR029063">
    <property type="entry name" value="SAM-dependent_MTases_sf"/>
</dbReference>
<dbReference type="InterPro" id="IPR011610">
    <property type="entry name" value="SAM_mthyl_Trfase_ML2640-like"/>
</dbReference>
<dbReference type="NCBIfam" id="TIGR00027">
    <property type="entry name" value="mthyl_TIGR00027"/>
    <property type="match status" value="1"/>
</dbReference>
<dbReference type="PANTHER" id="PTHR43619">
    <property type="entry name" value="S-ADENOSYL-L-METHIONINE-DEPENDENT METHYLTRANSFERASE YKTD-RELATED"/>
    <property type="match status" value="1"/>
</dbReference>
<dbReference type="PANTHER" id="PTHR43619:SF2">
    <property type="entry name" value="S-ADENOSYL-L-METHIONINE-DEPENDENT METHYLTRANSFERASES SUPERFAMILY PROTEIN"/>
    <property type="match status" value="1"/>
</dbReference>
<dbReference type="Pfam" id="PF04072">
    <property type="entry name" value="LCM"/>
    <property type="match status" value="1"/>
</dbReference>
<dbReference type="SUPFAM" id="SSF53335">
    <property type="entry name" value="S-adenosyl-L-methionine-dependent methyltransferases"/>
    <property type="match status" value="1"/>
</dbReference>
<gene>
    <name type="ordered locus">BCG_0883</name>
</gene>
<sequence>MVRADRDRWDLATSVGATATMVAAQRALAADPRYALIDDPYAAPLVRAVGMDVYTRLVDWQIPVEGDSEFDPQRMATGMACRTRFFDQFFLDATHSGIGQFVILASGLDARAYRLAWPVGSIVYEVDMPEVIEFKTATLSDLGAEPATERRTVAVDLRDDWATALQTAGFDPKVPAAWSAEGLLVYLPVEAQDALFDNITALSAPGSRLAFEFVPDTAIFADERWRNYHNRMSELGFDIDLNELVYHGQRGHVLDYLTRDGWQTSALTVTQLYEANGFAYPDDELATAFADLTYSSATLMR</sequence>
<accession>A1KGW3</accession>
<reference key="1">
    <citation type="journal article" date="2007" name="Proc. Natl. Acad. Sci. U.S.A.">
        <title>Genome plasticity of BCG and impact on vaccine efficacy.</title>
        <authorList>
            <person name="Brosch R."/>
            <person name="Gordon S.V."/>
            <person name="Garnier T."/>
            <person name="Eiglmeier K."/>
            <person name="Frigui W."/>
            <person name="Valenti P."/>
            <person name="Dos Santos S."/>
            <person name="Duthoy S."/>
            <person name="Lacroix C."/>
            <person name="Garcia-Pelayo C."/>
            <person name="Inwald J.K."/>
            <person name="Golby P."/>
            <person name="Garcia J.N."/>
            <person name="Hewinson R.G."/>
            <person name="Behr M.A."/>
            <person name="Quail M.A."/>
            <person name="Churcher C."/>
            <person name="Barrell B.G."/>
            <person name="Parkhill J."/>
            <person name="Cole S.T."/>
        </authorList>
    </citation>
    <scope>NUCLEOTIDE SEQUENCE [LARGE SCALE GENOMIC DNA]</scope>
    <source>
        <strain>BCG / Pasteur 1173P2</strain>
    </source>
</reference>
<organism>
    <name type="scientific">Mycobacterium bovis (strain BCG / Pasteur 1173P2)</name>
    <dbReference type="NCBI Taxonomy" id="410289"/>
    <lineage>
        <taxon>Bacteria</taxon>
        <taxon>Bacillati</taxon>
        <taxon>Actinomycetota</taxon>
        <taxon>Actinomycetes</taxon>
        <taxon>Mycobacteriales</taxon>
        <taxon>Mycobacteriaceae</taxon>
        <taxon>Mycobacterium</taxon>
        <taxon>Mycobacterium tuberculosis complex</taxon>
    </lineage>
</organism>
<name>Y883_MYCBP</name>
<protein>
    <recommendedName>
        <fullName>Putative S-adenosyl-L-methionine-dependent methyltransferase BCG_0883</fullName>
        <ecNumber>2.1.1.-</ecNumber>
    </recommendedName>
</protein>
<keyword id="KW-0489">Methyltransferase</keyword>
<keyword id="KW-0949">S-adenosyl-L-methionine</keyword>
<keyword id="KW-0808">Transferase</keyword>
<proteinExistence type="inferred from homology"/>
<evidence type="ECO:0000250" key="1"/>
<evidence type="ECO:0000305" key="2"/>